<name>VPS20_YEAST</name>
<sequence>MGQKSSKVHITKTDRAILEVKRSKDEIHKFTRRTDNLILVEKSQLKDLIRKNPENYKSNMKVRFLLKRIHYQEHLLQQASDQLINLENMVSTLEFKMVEKQFINGLKNGNEILKKLNKEFSNVDELMDDVQDQIAYQNEINETLSRSLVGTSNYEDDLDKELDALESELNPEKMNNAKVANMPSTEGLPSLPQGEQTEQKEREEFATEERSDTKEPLALLS</sequence>
<protein>
    <recommendedName>
        <fullName>Vacuolar protein sorting-associated protein 20</fullName>
    </recommendedName>
    <alternativeName>
        <fullName>Amino acid sensor-independent protein 10</fullName>
    </alternativeName>
    <alternativeName>
        <fullName>Charged multivesicular body protein 6</fullName>
    </alternativeName>
    <alternativeName>
        <fullName>ESCRT-III complex subunit VPS20</fullName>
    </alternativeName>
    <alternativeName>
        <fullName>Vacuolar protein-targeting protein 20</fullName>
    </alternativeName>
</protein>
<proteinExistence type="evidence at protein level"/>
<comment type="function">
    <text evidence="3 4 5 6 8">Class E VPS protein implicated in concentration and sorting of cargo proteins of the multivesicular body (MVB) for incorporation into intralumenal vesicles. The lumenal sequestrated membrane proteins will be targeted into the vacuole after fusion of the endosome with the vacuole. Acts a component of the ESCRT-III complex, which appears to be critical for late steps in MVB sorting, such as membrane invagination and final cargo sorting and recruitment of late-acting components of the sorting machinery. The MVB pathway requires the sequential function of ESCRT-O, -I,-II and -III complex assemblies. Required for the oligomerization of SNF7 into a membrane-associated filament. The VPS20-SNF7 subcomplex is responsible for the membrane association of the ESCRT-III complex. Also required for the RIM101 repressor proteolytic activation.</text>
</comment>
<comment type="subunit">
    <text evidence="5 6 9 10">Core component of the ESCRT-III complex (endosomal sorting required for transport complex III). ESCRT-III appears to be sequentially assembled as a flat lattice on the endosome membrane and forms a transient 450 kDa complex that contains DID4, oligomerized SNF7, VPS20 and VPS24. SNF7 oligomerization into a membrane-associated filament is nucleated by association of SNF7 with VPS20; the process is terminated through association of VPS24, possibly by capping the SNF7 filament. VPS24 subsequently associates with DID4/VPS2. Interacts with the VPS4. Interacts with VPS25; the interaction mediates the association with the ESCRT-II complex.</text>
</comment>
<comment type="interaction">
    <interactant intactId="EBI-28157">
        <id>Q04272</id>
    </interactant>
    <interactant intactId="EBI-17554">
        <id>P39929</id>
        <label>SNF7</label>
    </interactant>
    <organismsDiffer>false</organismsDiffer>
    <experiments>5</experiments>
</comment>
<comment type="interaction">
    <interactant intactId="EBI-28157">
        <id>Q04272</id>
    </interactant>
    <interactant intactId="EBI-25595">
        <id>P47142</id>
        <label>VPS25</label>
    </interactant>
    <organismsDiffer>false</organismsDiffer>
    <experiments>2</experiments>
</comment>
<comment type="interaction">
    <interactant intactId="EBI-28157">
        <id>Q04272</id>
    </interactant>
    <interactant intactId="EBI-20475">
        <id>P52917</id>
        <label>VPS4</label>
    </interactant>
    <organismsDiffer>false</organismsDiffer>
    <experiments>6</experiments>
</comment>
<comment type="subcellular location">
    <subcellularLocation>
        <location>Endosome membrane</location>
        <topology>Peripheral membrane protein</topology>
    </subcellularLocation>
    <subcellularLocation>
        <location>Vacuole membrane</location>
        <topology>Peripheral membrane protein</topology>
    </subcellularLocation>
</comment>
<comment type="miscellaneous">
    <text evidence="7">Present with 937 molecules/cell in log phase SD medium.</text>
</comment>
<comment type="similarity">
    <text evidence="12">Belongs to the SNF7 family.</text>
</comment>
<feature type="initiator methionine" description="Removed">
    <location>
        <position position="1"/>
    </location>
</feature>
<feature type="chain" id="PRO_0000211515" description="Vacuolar protein sorting-associated protein 20">
    <location>
        <begin position="2"/>
        <end position="221"/>
    </location>
</feature>
<feature type="region of interest" description="Disordered" evidence="2">
    <location>
        <begin position="170"/>
        <end position="221"/>
    </location>
</feature>
<feature type="coiled-coil region" evidence="1">
    <location>
        <begin position="72"/>
        <end position="178"/>
    </location>
</feature>
<feature type="compositionally biased region" description="Basic and acidic residues" evidence="2">
    <location>
        <begin position="197"/>
        <end position="215"/>
    </location>
</feature>
<feature type="lipid moiety-binding region" description="N-myristoyl glycine" evidence="11">
    <location>
        <position position="2"/>
    </location>
</feature>
<feature type="mutagenesis site" description="Loss of membrane association." evidence="5">
    <original>G</original>
    <variation>A</variation>
    <location>
        <position position="2"/>
    </location>
</feature>
<feature type="helix" evidence="13">
    <location>
        <begin position="171"/>
        <end position="180"/>
    </location>
</feature>
<organism>
    <name type="scientific">Saccharomyces cerevisiae (strain ATCC 204508 / S288c)</name>
    <name type="common">Baker's yeast</name>
    <dbReference type="NCBI Taxonomy" id="559292"/>
    <lineage>
        <taxon>Eukaryota</taxon>
        <taxon>Fungi</taxon>
        <taxon>Dikarya</taxon>
        <taxon>Ascomycota</taxon>
        <taxon>Saccharomycotina</taxon>
        <taxon>Saccharomycetes</taxon>
        <taxon>Saccharomycetales</taxon>
        <taxon>Saccharomycetaceae</taxon>
        <taxon>Saccharomyces</taxon>
    </lineage>
</organism>
<evidence type="ECO:0000255" key="1"/>
<evidence type="ECO:0000256" key="2">
    <source>
        <dbReference type="SAM" id="MobiDB-lite"/>
    </source>
</evidence>
<evidence type="ECO:0000269" key="3">
    <source>
    </source>
</evidence>
<evidence type="ECO:0000269" key="4">
    <source>
    </source>
</evidence>
<evidence type="ECO:0000269" key="5">
    <source>
    </source>
</evidence>
<evidence type="ECO:0000269" key="6">
    <source>
    </source>
</evidence>
<evidence type="ECO:0000269" key="7">
    <source>
    </source>
</evidence>
<evidence type="ECO:0000269" key="8">
    <source>
    </source>
</evidence>
<evidence type="ECO:0000269" key="9">
    <source>
    </source>
</evidence>
<evidence type="ECO:0000269" key="10">
    <source>
    </source>
</evidence>
<evidence type="ECO:0000269" key="11">
    <source>
    </source>
</evidence>
<evidence type="ECO:0000305" key="12"/>
<evidence type="ECO:0007829" key="13">
    <source>
        <dbReference type="PDB" id="5FVL"/>
    </source>
</evidence>
<accession>Q04272</accession>
<accession>D6VZQ1</accession>
<dbReference type="EMBL" id="Z49259">
    <property type="protein sequence ID" value="CAA89223.1"/>
    <property type="molecule type" value="Genomic_DNA"/>
</dbReference>
<dbReference type="EMBL" id="BK006946">
    <property type="protein sequence ID" value="DAA09975.1"/>
    <property type="molecule type" value="Genomic_DNA"/>
</dbReference>
<dbReference type="PIR" id="S54452">
    <property type="entry name" value="S54452"/>
</dbReference>
<dbReference type="RefSeq" id="NP_013794.1">
    <property type="nucleotide sequence ID" value="NM_001182576.1"/>
</dbReference>
<dbReference type="PDB" id="5FVL">
    <property type="method" value="X-ray"/>
    <property type="resolution" value="1.97 A"/>
    <property type="chains" value="C/D=170-195"/>
</dbReference>
<dbReference type="PDBsum" id="5FVL"/>
<dbReference type="SMR" id="Q04272"/>
<dbReference type="BioGRID" id="35253">
    <property type="interactions" value="173"/>
</dbReference>
<dbReference type="ComplexPortal" id="CPX-1624">
    <property type="entry name" value="ESCRT-III complex"/>
</dbReference>
<dbReference type="DIP" id="DIP-1961N"/>
<dbReference type="FunCoup" id="Q04272">
    <property type="interactions" value="633"/>
</dbReference>
<dbReference type="IntAct" id="Q04272">
    <property type="interactions" value="11"/>
</dbReference>
<dbReference type="MINT" id="Q04272"/>
<dbReference type="STRING" id="4932.YMR077C"/>
<dbReference type="TCDB" id="3.A.31.1.1">
    <property type="family name" value="the endosomal sorting complexes required for transport iii (escrt-iii) family"/>
</dbReference>
<dbReference type="iPTMnet" id="Q04272"/>
<dbReference type="PaxDb" id="4932-YMR077C"/>
<dbReference type="PeptideAtlas" id="Q04272"/>
<dbReference type="EnsemblFungi" id="YMR077C_mRNA">
    <property type="protein sequence ID" value="YMR077C"/>
    <property type="gene ID" value="YMR077C"/>
</dbReference>
<dbReference type="GeneID" id="855101"/>
<dbReference type="KEGG" id="sce:YMR077C"/>
<dbReference type="AGR" id="SGD:S000004682"/>
<dbReference type="SGD" id="S000004682">
    <property type="gene designation" value="VPS20"/>
</dbReference>
<dbReference type="VEuPathDB" id="FungiDB:YMR077C"/>
<dbReference type="eggNOG" id="KOG2910">
    <property type="taxonomic scope" value="Eukaryota"/>
</dbReference>
<dbReference type="HOGENOM" id="CLU_086201_2_0_1"/>
<dbReference type="InParanoid" id="Q04272"/>
<dbReference type="OMA" id="RAKQPAM"/>
<dbReference type="OrthoDB" id="441172at2759"/>
<dbReference type="BioCyc" id="YEAST:G3O-32779-MONOMER"/>
<dbReference type="Reactome" id="R-SCE-1632852">
    <property type="pathway name" value="Macroautophagy"/>
</dbReference>
<dbReference type="Reactome" id="R-SCE-917729">
    <property type="pathway name" value="Endosomal Sorting Complex Required For Transport (ESCRT)"/>
</dbReference>
<dbReference type="Reactome" id="R-SCE-9668328">
    <property type="pathway name" value="Sealing of the nuclear envelope (NE) by ESCRT-III"/>
</dbReference>
<dbReference type="BioGRID-ORCS" id="855101">
    <property type="hits" value="0 hits in 10 CRISPR screens"/>
</dbReference>
<dbReference type="EvolutionaryTrace" id="Q04272"/>
<dbReference type="PRO" id="PR:Q04272"/>
<dbReference type="Proteomes" id="UP000002311">
    <property type="component" value="Chromosome XIII"/>
</dbReference>
<dbReference type="RNAct" id="Q04272">
    <property type="molecule type" value="protein"/>
</dbReference>
<dbReference type="GO" id="GO:0005737">
    <property type="term" value="C:cytoplasm"/>
    <property type="evidence" value="ECO:0000314"/>
    <property type="project" value="SGD"/>
</dbReference>
<dbReference type="GO" id="GO:0005829">
    <property type="term" value="C:cytosol"/>
    <property type="evidence" value="ECO:0000314"/>
    <property type="project" value="SGD"/>
</dbReference>
<dbReference type="GO" id="GO:0005783">
    <property type="term" value="C:endoplasmic reticulum"/>
    <property type="evidence" value="ECO:0000314"/>
    <property type="project" value="SGD"/>
</dbReference>
<dbReference type="GO" id="GO:0000815">
    <property type="term" value="C:ESCRT III complex"/>
    <property type="evidence" value="ECO:0000314"/>
    <property type="project" value="SGD"/>
</dbReference>
<dbReference type="GO" id="GO:0005771">
    <property type="term" value="C:multivesicular body"/>
    <property type="evidence" value="ECO:0000318"/>
    <property type="project" value="GO_Central"/>
</dbReference>
<dbReference type="GO" id="GO:0005774">
    <property type="term" value="C:vacuolar membrane"/>
    <property type="evidence" value="ECO:0007669"/>
    <property type="project" value="UniProtKB-SubCell"/>
</dbReference>
<dbReference type="GO" id="GO:1904669">
    <property type="term" value="P:ATP export"/>
    <property type="evidence" value="ECO:0000315"/>
    <property type="project" value="SGD"/>
</dbReference>
<dbReference type="GO" id="GO:0070676">
    <property type="term" value="P:intralumenal vesicle formation"/>
    <property type="evidence" value="ECO:0000315"/>
    <property type="project" value="SGD"/>
</dbReference>
<dbReference type="GO" id="GO:0045324">
    <property type="term" value="P:late endosome to vacuole transport"/>
    <property type="evidence" value="ECO:0000315"/>
    <property type="project" value="SGD"/>
</dbReference>
<dbReference type="GO" id="GO:0032511">
    <property type="term" value="P:late endosome to vacuole transport via multivesicular body sorting pathway"/>
    <property type="evidence" value="ECO:0000318"/>
    <property type="project" value="GO_Central"/>
</dbReference>
<dbReference type="GO" id="GO:0007031">
    <property type="term" value="P:peroxisome organization"/>
    <property type="evidence" value="ECO:0000315"/>
    <property type="project" value="SGD"/>
</dbReference>
<dbReference type="GO" id="GO:0015031">
    <property type="term" value="P:protein transport"/>
    <property type="evidence" value="ECO:0007669"/>
    <property type="project" value="UniProtKB-KW"/>
</dbReference>
<dbReference type="GO" id="GO:0043162">
    <property type="term" value="P:ubiquitin-dependent protein catabolic process via the multivesicular body sorting pathway"/>
    <property type="evidence" value="ECO:0000314"/>
    <property type="project" value="ComplexPortal"/>
</dbReference>
<dbReference type="GO" id="GO:0006900">
    <property type="term" value="P:vesicle budding from membrane"/>
    <property type="evidence" value="ECO:0000318"/>
    <property type="project" value="GO_Central"/>
</dbReference>
<dbReference type="Gene3D" id="6.10.250.1710">
    <property type="match status" value="1"/>
</dbReference>
<dbReference type="InterPro" id="IPR005024">
    <property type="entry name" value="Snf7_fam"/>
</dbReference>
<dbReference type="PANTHER" id="PTHR22761">
    <property type="entry name" value="CHARGED MULTIVESICULAR BODY PROTEIN"/>
    <property type="match status" value="1"/>
</dbReference>
<dbReference type="PANTHER" id="PTHR22761:SF5">
    <property type="entry name" value="CHARGED MULTIVESICULAR BODY PROTEIN 6"/>
    <property type="match status" value="1"/>
</dbReference>
<dbReference type="Pfam" id="PF03357">
    <property type="entry name" value="Snf7"/>
    <property type="match status" value="1"/>
</dbReference>
<keyword id="KW-0002">3D-structure</keyword>
<keyword id="KW-0175">Coiled coil</keyword>
<keyword id="KW-0967">Endosome</keyword>
<keyword id="KW-0449">Lipoprotein</keyword>
<keyword id="KW-0472">Membrane</keyword>
<keyword id="KW-0519">Myristate</keyword>
<keyword id="KW-0653">Protein transport</keyword>
<keyword id="KW-1185">Reference proteome</keyword>
<keyword id="KW-0813">Transport</keyword>
<keyword id="KW-0926">Vacuole</keyword>
<gene>
    <name type="primary">VPS20</name>
    <name type="synonym">ASI10</name>
    <name type="synonym">CHM6</name>
    <name type="synonym">VPT20</name>
    <name type="ordered locus">YMR077C</name>
    <name type="ORF">YM9582.02C</name>
</gene>
<reference key="1">
    <citation type="journal article" date="1997" name="Nature">
        <title>The nucleotide sequence of Saccharomyces cerevisiae chromosome XIII.</title>
        <authorList>
            <person name="Bowman S."/>
            <person name="Churcher C.M."/>
            <person name="Badcock K."/>
            <person name="Brown D."/>
            <person name="Chillingworth T."/>
            <person name="Connor R."/>
            <person name="Dedman K."/>
            <person name="Devlin K."/>
            <person name="Gentles S."/>
            <person name="Hamlin N."/>
            <person name="Hunt S."/>
            <person name="Jagels K."/>
            <person name="Lye G."/>
            <person name="Moule S."/>
            <person name="Odell C."/>
            <person name="Pearson D."/>
            <person name="Rajandream M.A."/>
            <person name="Rice P."/>
            <person name="Skelton J."/>
            <person name="Walsh S.V."/>
            <person name="Whitehead S."/>
            <person name="Barrell B.G."/>
        </authorList>
    </citation>
    <scope>NUCLEOTIDE SEQUENCE [LARGE SCALE GENOMIC DNA]</scope>
    <source>
        <strain>ATCC 204508 / S288c</strain>
    </source>
</reference>
<reference key="2">
    <citation type="journal article" date="2014" name="G3 (Bethesda)">
        <title>The reference genome sequence of Saccharomyces cerevisiae: Then and now.</title>
        <authorList>
            <person name="Engel S.R."/>
            <person name="Dietrich F.S."/>
            <person name="Fisk D.G."/>
            <person name="Binkley G."/>
            <person name="Balakrishnan R."/>
            <person name="Costanzo M.C."/>
            <person name="Dwight S.S."/>
            <person name="Hitz B.C."/>
            <person name="Karra K."/>
            <person name="Nash R.S."/>
            <person name="Weng S."/>
            <person name="Wong E.D."/>
            <person name="Lloyd P."/>
            <person name="Skrzypek M.S."/>
            <person name="Miyasato S.R."/>
            <person name="Simison M."/>
            <person name="Cherry J.M."/>
        </authorList>
    </citation>
    <scope>GENOME REANNOTATION</scope>
    <source>
        <strain>ATCC 204508 / S288c</strain>
    </source>
</reference>
<reference key="3">
    <citation type="journal article" date="1998" name="J. Biol. Chem.">
        <title>A role for Saccharomyces cerevisiae fatty acid activation protein 4 in regulating protein N-myristoylation during entry into stationary phase.</title>
        <authorList>
            <person name="Ashrafi K."/>
            <person name="Farazi T.A."/>
            <person name="Gordon J.I."/>
        </authorList>
    </citation>
    <scope>MYRISTOYLATION AT GLY-2</scope>
</reference>
<reference key="4">
    <citation type="journal article" date="2001" name="J. Cell Sci.">
        <title>CHMP1 functions as a member of a newly defined family of vesicle trafficking proteins.</title>
        <authorList>
            <person name="Howard T.L."/>
            <person name="Stauffer D.R."/>
            <person name="Degnin C.R."/>
            <person name="Hollenberg S.M."/>
        </authorList>
    </citation>
    <scope>FUNCTION</scope>
</reference>
<reference key="5">
    <citation type="journal article" date="2001" name="Mol. Biol. Cell">
        <title>A family of small coiled-coil-forming proteins functioning at the late endosome in yeast.</title>
        <authorList>
            <person name="Kranz A."/>
            <person name="Kinner A."/>
            <person name="Koelling R."/>
        </authorList>
    </citation>
    <scope>FUNCTION</scope>
    <scope>SUBCELLULAR LOCATION</scope>
</reference>
<reference key="6">
    <citation type="journal article" date="2002" name="Dev. Cell">
        <title>Escrt-III: an endosome-associated heterooligomeric protein complex required for mvb sorting.</title>
        <authorList>
            <person name="Babst M."/>
            <person name="Katzmann D.J."/>
            <person name="Estepa-Sabal E.J."/>
            <person name="Meerloo T."/>
            <person name="Emr S.D."/>
        </authorList>
    </citation>
    <scope>FUNCTION</scope>
    <scope>IDENTIFICATION IN THE ESCRT-III COMPLEX</scope>
    <scope>INTERACTION WITH VPS2; VPS24 AND SNF7</scope>
    <scope>SUBCELLULAR LOCATION</scope>
    <scope>MUTAGENESIS OF GLY-2</scope>
</reference>
<reference key="7">
    <citation type="journal article" date="2003" name="J. Cell Sci.">
        <title>Vps20p and Vta1p interact with Vps4p and function in multivesicular body sorting and endosomal transport in Saccharomyces cerevisiae.</title>
        <authorList>
            <person name="Yeo S.C.L."/>
            <person name="Xu L."/>
            <person name="Ren J."/>
            <person name="Boulton V.J."/>
            <person name="Wagle M.D."/>
            <person name="Liu C."/>
            <person name="Ren G."/>
            <person name="Wong P."/>
            <person name="Zahn R."/>
            <person name="Sasajala P."/>
            <person name="Yang H."/>
            <person name="Piper R.C."/>
            <person name="Munn A.L."/>
        </authorList>
    </citation>
    <scope>FUNCTION</scope>
    <scope>INTERACTION WITH VPS4</scope>
</reference>
<reference key="8">
    <citation type="journal article" date="2003" name="Nature">
        <title>Global analysis of protein localization in budding yeast.</title>
        <authorList>
            <person name="Huh W.-K."/>
            <person name="Falvo J.V."/>
            <person name="Gerke L.C."/>
            <person name="Carroll A.S."/>
            <person name="Howson R.W."/>
            <person name="Weissman J.S."/>
            <person name="O'Shea E.K."/>
        </authorList>
    </citation>
    <scope>SUBCELLULAR LOCATION [LARGE SCALE ANALYSIS]</scope>
</reference>
<reference key="9">
    <citation type="journal article" date="2003" name="Nature">
        <title>Global analysis of protein expression in yeast.</title>
        <authorList>
            <person name="Ghaemmaghami S."/>
            <person name="Huh W.-K."/>
            <person name="Bower K."/>
            <person name="Howson R.W."/>
            <person name="Belle A."/>
            <person name="Dephoure N."/>
            <person name="O'Shea E.K."/>
            <person name="Weissman J.S."/>
        </authorList>
    </citation>
    <scope>LEVEL OF PROTEIN EXPRESSION [LARGE SCALE ANALYSIS]</scope>
</reference>
<reference key="10">
    <citation type="journal article" date="2004" name="Dev. Cell">
        <title>ESCRT-II, an endosome-associated complex required for protein sorting: crystal structure and interactions with ESCRT-III and membranes.</title>
        <authorList>
            <person name="Teo H."/>
            <person name="Perisic O."/>
            <person name="Gonzalez B."/>
            <person name="Williams R.L."/>
        </authorList>
    </citation>
    <scope>INTERACTION WITH VPS25</scope>
</reference>
<reference key="11">
    <citation type="journal article" date="2004" name="Mol. Biol. Cell">
        <title>Multivesicular body-ESCRT components function in pH response regulation in Saccharomyces cerevisiae and Candida albicans.</title>
        <authorList>
            <person name="Xu W."/>
            <person name="Smith F.J. Jr."/>
            <person name="Subaran R."/>
            <person name="Mitchell A.P."/>
        </authorList>
    </citation>
    <scope>FUNCTION</scope>
</reference>
<reference key="12">
    <citation type="journal article" date="2007" name="J. Mol. Biol.">
        <title>Structural characterization of the ATPase reaction cycle of endosomal AAA protein Vps4.</title>
        <authorList>
            <person name="Xiao J."/>
            <person name="Xia H."/>
            <person name="Yoshino-Koh K."/>
            <person name="Zhou J."/>
            <person name="Xu Z."/>
        </authorList>
    </citation>
    <scope>INTERACTION WITH VPS4</scope>
</reference>
<reference key="13">
    <citation type="journal article" date="2008" name="Mol. Cell. Proteomics">
        <title>A multidimensional chromatography technology for in-depth phosphoproteome analysis.</title>
        <authorList>
            <person name="Albuquerque C.P."/>
            <person name="Smolka M.B."/>
            <person name="Payne S.H."/>
            <person name="Bafna V."/>
            <person name="Eng J."/>
            <person name="Zhou H."/>
        </authorList>
    </citation>
    <scope>IDENTIFICATION BY MASS SPECTROMETRY [LARGE SCALE ANALYSIS]</scope>
</reference>